<keyword id="KW-0030">Aminoacyl-tRNA synthetase</keyword>
<keyword id="KW-0067">ATP-binding</keyword>
<keyword id="KW-0963">Cytoplasm</keyword>
<keyword id="KW-0436">Ligase</keyword>
<keyword id="KW-0547">Nucleotide-binding</keyword>
<keyword id="KW-0648">Protein biosynthesis</keyword>
<keyword id="KW-1185">Reference proteome</keyword>
<dbReference type="EC" id="6.1.1.19"/>
<dbReference type="EMBL" id="AE006468">
    <property type="protein sequence ID" value="AAL20825.1"/>
    <property type="molecule type" value="Genomic_DNA"/>
</dbReference>
<dbReference type="RefSeq" id="NP_460866.1">
    <property type="nucleotide sequence ID" value="NC_003197.2"/>
</dbReference>
<dbReference type="RefSeq" id="WP_001025361.1">
    <property type="nucleotide sequence ID" value="NC_003197.2"/>
</dbReference>
<dbReference type="SMR" id="P0CL51"/>
<dbReference type="STRING" id="99287.STM1909"/>
<dbReference type="PaxDb" id="99287-STM1909"/>
<dbReference type="GeneID" id="1253430"/>
<dbReference type="KEGG" id="stm:STM1909"/>
<dbReference type="PATRIC" id="fig|99287.12.peg.2025"/>
<dbReference type="HOGENOM" id="CLU_006406_5_1_6"/>
<dbReference type="OMA" id="NKPLHLG"/>
<dbReference type="PhylomeDB" id="P0CL51"/>
<dbReference type="BioCyc" id="SENT99287:STM1909-MONOMER"/>
<dbReference type="Proteomes" id="UP000001014">
    <property type="component" value="Chromosome"/>
</dbReference>
<dbReference type="GO" id="GO:0005737">
    <property type="term" value="C:cytoplasm"/>
    <property type="evidence" value="ECO:0007669"/>
    <property type="project" value="UniProtKB-SubCell"/>
</dbReference>
<dbReference type="GO" id="GO:0004814">
    <property type="term" value="F:arginine-tRNA ligase activity"/>
    <property type="evidence" value="ECO:0000318"/>
    <property type="project" value="GO_Central"/>
</dbReference>
<dbReference type="GO" id="GO:0005524">
    <property type="term" value="F:ATP binding"/>
    <property type="evidence" value="ECO:0007669"/>
    <property type="project" value="UniProtKB-UniRule"/>
</dbReference>
<dbReference type="GO" id="GO:0006420">
    <property type="term" value="P:arginyl-tRNA aminoacylation"/>
    <property type="evidence" value="ECO:0000318"/>
    <property type="project" value="GO_Central"/>
</dbReference>
<dbReference type="CDD" id="cd07956">
    <property type="entry name" value="Anticodon_Ia_Arg"/>
    <property type="match status" value="1"/>
</dbReference>
<dbReference type="CDD" id="cd00671">
    <property type="entry name" value="ArgRS_core"/>
    <property type="match status" value="1"/>
</dbReference>
<dbReference type="FunFam" id="1.10.730.10:FF:000001">
    <property type="entry name" value="Arginine--tRNA ligase"/>
    <property type="match status" value="1"/>
</dbReference>
<dbReference type="FunFam" id="3.30.1360.70:FF:000001">
    <property type="entry name" value="Arginine--tRNA ligase"/>
    <property type="match status" value="1"/>
</dbReference>
<dbReference type="FunFam" id="3.40.50.620:FF:000030">
    <property type="entry name" value="Arginine--tRNA ligase"/>
    <property type="match status" value="1"/>
</dbReference>
<dbReference type="Gene3D" id="3.30.1360.70">
    <property type="entry name" value="Arginyl tRNA synthetase N-terminal domain"/>
    <property type="match status" value="1"/>
</dbReference>
<dbReference type="Gene3D" id="3.40.50.620">
    <property type="entry name" value="HUPs"/>
    <property type="match status" value="1"/>
</dbReference>
<dbReference type="Gene3D" id="1.10.730.10">
    <property type="entry name" value="Isoleucyl-tRNA Synthetase, Domain 1"/>
    <property type="match status" value="1"/>
</dbReference>
<dbReference type="HAMAP" id="MF_00123">
    <property type="entry name" value="Arg_tRNA_synth"/>
    <property type="match status" value="1"/>
</dbReference>
<dbReference type="InterPro" id="IPR001412">
    <property type="entry name" value="aa-tRNA-synth_I_CS"/>
</dbReference>
<dbReference type="InterPro" id="IPR001278">
    <property type="entry name" value="Arg-tRNA-ligase"/>
</dbReference>
<dbReference type="InterPro" id="IPR005148">
    <property type="entry name" value="Arg-tRNA-synth_N"/>
</dbReference>
<dbReference type="InterPro" id="IPR036695">
    <property type="entry name" value="Arg-tRNA-synth_N_sf"/>
</dbReference>
<dbReference type="InterPro" id="IPR035684">
    <property type="entry name" value="ArgRS_core"/>
</dbReference>
<dbReference type="InterPro" id="IPR008909">
    <property type="entry name" value="DALR_anticod-bd"/>
</dbReference>
<dbReference type="InterPro" id="IPR014729">
    <property type="entry name" value="Rossmann-like_a/b/a_fold"/>
</dbReference>
<dbReference type="InterPro" id="IPR009080">
    <property type="entry name" value="tRNAsynth_Ia_anticodon-bd"/>
</dbReference>
<dbReference type="NCBIfam" id="TIGR00456">
    <property type="entry name" value="argS"/>
    <property type="match status" value="1"/>
</dbReference>
<dbReference type="PANTHER" id="PTHR11956:SF5">
    <property type="entry name" value="ARGININE--TRNA LIGASE, CYTOPLASMIC"/>
    <property type="match status" value="1"/>
</dbReference>
<dbReference type="PANTHER" id="PTHR11956">
    <property type="entry name" value="ARGINYL-TRNA SYNTHETASE"/>
    <property type="match status" value="1"/>
</dbReference>
<dbReference type="Pfam" id="PF03485">
    <property type="entry name" value="Arg_tRNA_synt_N"/>
    <property type="match status" value="1"/>
</dbReference>
<dbReference type="Pfam" id="PF05746">
    <property type="entry name" value="DALR_1"/>
    <property type="match status" value="1"/>
</dbReference>
<dbReference type="Pfam" id="PF00750">
    <property type="entry name" value="tRNA-synt_1d"/>
    <property type="match status" value="1"/>
</dbReference>
<dbReference type="PRINTS" id="PR01038">
    <property type="entry name" value="TRNASYNTHARG"/>
</dbReference>
<dbReference type="SMART" id="SM01016">
    <property type="entry name" value="Arg_tRNA_synt_N"/>
    <property type="match status" value="1"/>
</dbReference>
<dbReference type="SMART" id="SM00836">
    <property type="entry name" value="DALR_1"/>
    <property type="match status" value="1"/>
</dbReference>
<dbReference type="SUPFAM" id="SSF47323">
    <property type="entry name" value="Anticodon-binding domain of a subclass of class I aminoacyl-tRNA synthetases"/>
    <property type="match status" value="1"/>
</dbReference>
<dbReference type="SUPFAM" id="SSF55190">
    <property type="entry name" value="Arginyl-tRNA synthetase (ArgRS), N-terminal 'additional' domain"/>
    <property type="match status" value="1"/>
</dbReference>
<dbReference type="SUPFAM" id="SSF52374">
    <property type="entry name" value="Nucleotidylyl transferase"/>
    <property type="match status" value="1"/>
</dbReference>
<dbReference type="PROSITE" id="PS00178">
    <property type="entry name" value="AA_TRNA_LIGASE_I"/>
    <property type="match status" value="1"/>
</dbReference>
<comment type="catalytic activity">
    <reaction>
        <text>tRNA(Arg) + L-arginine + ATP = L-arginyl-tRNA(Arg) + AMP + diphosphate</text>
        <dbReference type="Rhea" id="RHEA:20301"/>
        <dbReference type="Rhea" id="RHEA-COMP:9658"/>
        <dbReference type="Rhea" id="RHEA-COMP:9673"/>
        <dbReference type="ChEBI" id="CHEBI:30616"/>
        <dbReference type="ChEBI" id="CHEBI:32682"/>
        <dbReference type="ChEBI" id="CHEBI:33019"/>
        <dbReference type="ChEBI" id="CHEBI:78442"/>
        <dbReference type="ChEBI" id="CHEBI:78513"/>
        <dbReference type="ChEBI" id="CHEBI:456215"/>
        <dbReference type="EC" id="6.1.1.19"/>
    </reaction>
</comment>
<comment type="subunit">
    <text evidence="1">Monomer.</text>
</comment>
<comment type="subcellular location">
    <subcellularLocation>
        <location evidence="1">Cytoplasm</location>
    </subcellularLocation>
</comment>
<comment type="similarity">
    <text evidence="2">Belongs to the class-I aminoacyl-tRNA synthetase family.</text>
</comment>
<name>SYR_SALTY</name>
<evidence type="ECO:0000250" key="1"/>
<evidence type="ECO:0000305" key="2"/>
<sequence length="577" mass="64275">MNIQALLSEKVSQAMIAAGAPADCEPQVRQSAKVQFGDYQANGMMAVAKKLGMAPRQLAEQVLTHLDLSGIASKVEIAGPGFINIFLEPAFLAEQVQQALASDRLGVSQPTRQTIVVDYSAPNVAKEMHVGHLRSTIIGDAAVRTLEFLGHHVIRANHVGDWGTQFGMLIAWLEKQQQENAGDMALADLEGFYRDAKKHYDEDEAFAERARNYVVKLQSGDTYFREMWRKLVDITMTQNQITYDRLNVTLTRDDVMGESLYNPMLPGIVADLKAKGLAVESEGATVVFLDEFKNKEGDPMGVIIQKKDGGYLYTTTDIACAKYRYETLHADRVLYYIDSRQHQHLMQAWTIVRKAGYVPDSVPLEHHMFGMMLGKDGKPFKTRAGGTVKLADLLDEALERARRLVAEKNPDMPADELEKLANAVGIGAVKYADLSKNRTTDYIFDWDNMLAFEGNTAPYMQYAYTRVLSVFRKANIDEQALASAPVIISEDREAQLAARLLQFEETLTVVAREGTPHVMCAYLYDVAGLFSGFYEHCPILSAENDAVRNSRLKLAQLTAKTLKLGLDTLGIETVERM</sequence>
<reference key="1">
    <citation type="journal article" date="2001" name="Nature">
        <title>Complete genome sequence of Salmonella enterica serovar Typhimurium LT2.</title>
        <authorList>
            <person name="McClelland M."/>
            <person name="Sanderson K.E."/>
            <person name="Spieth J."/>
            <person name="Clifton S.W."/>
            <person name="Latreille P."/>
            <person name="Courtney L."/>
            <person name="Porwollik S."/>
            <person name="Ali J."/>
            <person name="Dante M."/>
            <person name="Du F."/>
            <person name="Hou S."/>
            <person name="Layman D."/>
            <person name="Leonard S."/>
            <person name="Nguyen C."/>
            <person name="Scott K."/>
            <person name="Holmes A."/>
            <person name="Grewal N."/>
            <person name="Mulvaney E."/>
            <person name="Ryan E."/>
            <person name="Sun H."/>
            <person name="Florea L."/>
            <person name="Miller W."/>
            <person name="Stoneking T."/>
            <person name="Nhan M."/>
            <person name="Waterston R."/>
            <person name="Wilson R.K."/>
        </authorList>
    </citation>
    <scope>NUCLEOTIDE SEQUENCE [LARGE SCALE GENOMIC DNA]</scope>
    <source>
        <strain>LT2 / SGSC1412 / ATCC 700720</strain>
    </source>
</reference>
<gene>
    <name type="primary">argS</name>
    <name type="ordered locus">STM1909</name>
</gene>
<organism>
    <name type="scientific">Salmonella typhimurium (strain LT2 / SGSC1412 / ATCC 700720)</name>
    <dbReference type="NCBI Taxonomy" id="99287"/>
    <lineage>
        <taxon>Bacteria</taxon>
        <taxon>Pseudomonadati</taxon>
        <taxon>Pseudomonadota</taxon>
        <taxon>Gammaproteobacteria</taxon>
        <taxon>Enterobacterales</taxon>
        <taxon>Enterobacteriaceae</taxon>
        <taxon>Salmonella</taxon>
    </lineage>
</organism>
<feature type="chain" id="PRO_0000151602" description="Arginine--tRNA ligase">
    <location>
        <begin position="1"/>
        <end position="577"/>
    </location>
</feature>
<feature type="short sequence motif" description="'HIGH' region">
    <location>
        <begin position="122"/>
        <end position="132"/>
    </location>
</feature>
<protein>
    <recommendedName>
        <fullName>Arginine--tRNA ligase</fullName>
        <ecNumber>6.1.1.19</ecNumber>
    </recommendedName>
    <alternativeName>
        <fullName>Arginyl-tRNA synthetase</fullName>
        <shortName>ArgRS</shortName>
    </alternativeName>
</protein>
<accession>P0CL51</accession>
<accession>P74871</accession>
<proteinExistence type="inferred from homology"/>